<feature type="chain" id="PRO_1000100095" description="Shikimate dehydrogenase (NADP(+))">
    <location>
        <begin position="1"/>
        <end position="262"/>
    </location>
</feature>
<feature type="active site" description="Proton acceptor" evidence="1">
    <location>
        <position position="66"/>
    </location>
</feature>
<feature type="binding site" evidence="1">
    <location>
        <begin position="15"/>
        <end position="17"/>
    </location>
    <ligand>
        <name>shikimate</name>
        <dbReference type="ChEBI" id="CHEBI:36208"/>
    </ligand>
</feature>
<feature type="binding site" evidence="1">
    <location>
        <position position="62"/>
    </location>
    <ligand>
        <name>shikimate</name>
        <dbReference type="ChEBI" id="CHEBI:36208"/>
    </ligand>
</feature>
<feature type="binding site" evidence="1">
    <location>
        <position position="78"/>
    </location>
    <ligand>
        <name>NADP(+)</name>
        <dbReference type="ChEBI" id="CHEBI:58349"/>
    </ligand>
</feature>
<feature type="binding site" evidence="1">
    <location>
        <position position="87"/>
    </location>
    <ligand>
        <name>shikimate</name>
        <dbReference type="ChEBI" id="CHEBI:36208"/>
    </ligand>
</feature>
<feature type="binding site" evidence="1">
    <location>
        <position position="102"/>
    </location>
    <ligand>
        <name>shikimate</name>
        <dbReference type="ChEBI" id="CHEBI:36208"/>
    </ligand>
</feature>
<feature type="binding site" evidence="1">
    <location>
        <begin position="126"/>
        <end position="130"/>
    </location>
    <ligand>
        <name>NADP(+)</name>
        <dbReference type="ChEBI" id="CHEBI:58349"/>
    </ligand>
</feature>
<feature type="binding site" evidence="1">
    <location>
        <begin position="150"/>
        <end position="155"/>
    </location>
    <ligand>
        <name>NADP(+)</name>
        <dbReference type="ChEBI" id="CHEBI:58349"/>
    </ligand>
</feature>
<feature type="binding site" evidence="1">
    <location>
        <position position="214"/>
    </location>
    <ligand>
        <name>NADP(+)</name>
        <dbReference type="ChEBI" id="CHEBI:58349"/>
    </ligand>
</feature>
<feature type="binding site" evidence="1">
    <location>
        <position position="216"/>
    </location>
    <ligand>
        <name>shikimate</name>
        <dbReference type="ChEBI" id="CHEBI:36208"/>
    </ligand>
</feature>
<feature type="binding site" evidence="1">
    <location>
        <position position="236"/>
    </location>
    <ligand>
        <name>NADP(+)</name>
        <dbReference type="ChEBI" id="CHEBI:58349"/>
    </ligand>
</feature>
<evidence type="ECO:0000255" key="1">
    <source>
        <dbReference type="HAMAP-Rule" id="MF_00222"/>
    </source>
</evidence>
<accession>B2HZQ2</accession>
<sequence>MTKQFAVIGNPIEQSRSPELHHAFAEKTGVDLNYQKRLAPLDGFESSMRSFFAKGGSGMNVTVPFKEQAFALCDVLTERAQIAKAVNTLWMENGKLHGDNTDGQGLVAAIQALEWNLENTTILILGAGGATRGVIYPLVQAGAKKIVIANRTLARAEQLVDDLKTAVPQAQLQAISLNDLEGDFDIVINATSASLSGDALQLPEKLKFKYAYEMAYGKPSSFLDQAKQRNVPYAEGFGMLVGQAIEAFSIWNNVRPQLKDFL</sequence>
<comment type="function">
    <text evidence="1">Involved in the biosynthesis of the chorismate, which leads to the biosynthesis of aromatic amino acids. Catalyzes the reversible NADPH linked reduction of 3-dehydroshikimate (DHSA) to yield shikimate (SA).</text>
</comment>
<comment type="catalytic activity">
    <reaction evidence="1">
        <text>shikimate + NADP(+) = 3-dehydroshikimate + NADPH + H(+)</text>
        <dbReference type="Rhea" id="RHEA:17737"/>
        <dbReference type="ChEBI" id="CHEBI:15378"/>
        <dbReference type="ChEBI" id="CHEBI:16630"/>
        <dbReference type="ChEBI" id="CHEBI:36208"/>
        <dbReference type="ChEBI" id="CHEBI:57783"/>
        <dbReference type="ChEBI" id="CHEBI:58349"/>
        <dbReference type="EC" id="1.1.1.25"/>
    </reaction>
</comment>
<comment type="pathway">
    <text evidence="1">Metabolic intermediate biosynthesis; chorismate biosynthesis; chorismate from D-erythrose 4-phosphate and phosphoenolpyruvate: step 4/7.</text>
</comment>
<comment type="subunit">
    <text evidence="1">Homodimer.</text>
</comment>
<comment type="similarity">
    <text evidence="1">Belongs to the shikimate dehydrogenase family.</text>
</comment>
<reference key="1">
    <citation type="journal article" date="2008" name="Antimicrob. Agents Chemother.">
        <title>Whole-genome pyrosequencing of an epidemic multidrug-resistant Acinetobacter baumannii strain belonging to the European clone II group.</title>
        <authorList>
            <person name="Iacono M."/>
            <person name="Villa L."/>
            <person name="Fortini D."/>
            <person name="Bordoni R."/>
            <person name="Imperi F."/>
            <person name="Bonnal R.J."/>
            <person name="Sicheritz-Ponten T."/>
            <person name="De Bellis G."/>
            <person name="Visca P."/>
            <person name="Cassone A."/>
            <person name="Carattoli A."/>
        </authorList>
    </citation>
    <scope>NUCLEOTIDE SEQUENCE [LARGE SCALE GENOMIC DNA]</scope>
    <source>
        <strain>ACICU</strain>
    </source>
</reference>
<gene>
    <name evidence="1" type="primary">aroE</name>
    <name type="ordered locus">ACICU_03310</name>
</gene>
<proteinExistence type="inferred from homology"/>
<protein>
    <recommendedName>
        <fullName evidence="1">Shikimate dehydrogenase (NADP(+))</fullName>
        <shortName evidence="1">SDH</shortName>
        <ecNumber evidence="1">1.1.1.25</ecNumber>
    </recommendedName>
</protein>
<keyword id="KW-0028">Amino-acid biosynthesis</keyword>
<keyword id="KW-0057">Aromatic amino acid biosynthesis</keyword>
<keyword id="KW-0521">NADP</keyword>
<keyword id="KW-0560">Oxidoreductase</keyword>
<dbReference type="EC" id="1.1.1.25" evidence="1"/>
<dbReference type="EMBL" id="CP000863">
    <property type="protein sequence ID" value="ACC58620.1"/>
    <property type="molecule type" value="Genomic_DNA"/>
</dbReference>
<dbReference type="RefSeq" id="WP_000166019.1">
    <property type="nucleotide sequence ID" value="NZ_CP031380.1"/>
</dbReference>
<dbReference type="SMR" id="B2HZQ2"/>
<dbReference type="KEGG" id="abc:ACICU_03310"/>
<dbReference type="HOGENOM" id="CLU_044063_2_1_6"/>
<dbReference type="UniPathway" id="UPA00053">
    <property type="reaction ID" value="UER00087"/>
</dbReference>
<dbReference type="Proteomes" id="UP000008839">
    <property type="component" value="Chromosome"/>
</dbReference>
<dbReference type="GO" id="GO:0005829">
    <property type="term" value="C:cytosol"/>
    <property type="evidence" value="ECO:0007669"/>
    <property type="project" value="TreeGrafter"/>
</dbReference>
<dbReference type="GO" id="GO:0050661">
    <property type="term" value="F:NADP binding"/>
    <property type="evidence" value="ECO:0007669"/>
    <property type="project" value="InterPro"/>
</dbReference>
<dbReference type="GO" id="GO:0004764">
    <property type="term" value="F:shikimate 3-dehydrogenase (NADP+) activity"/>
    <property type="evidence" value="ECO:0007669"/>
    <property type="project" value="UniProtKB-UniRule"/>
</dbReference>
<dbReference type="GO" id="GO:0008652">
    <property type="term" value="P:amino acid biosynthetic process"/>
    <property type="evidence" value="ECO:0007669"/>
    <property type="project" value="UniProtKB-KW"/>
</dbReference>
<dbReference type="GO" id="GO:0009073">
    <property type="term" value="P:aromatic amino acid family biosynthetic process"/>
    <property type="evidence" value="ECO:0007669"/>
    <property type="project" value="UniProtKB-KW"/>
</dbReference>
<dbReference type="GO" id="GO:0009423">
    <property type="term" value="P:chorismate biosynthetic process"/>
    <property type="evidence" value="ECO:0007669"/>
    <property type="project" value="UniProtKB-UniRule"/>
</dbReference>
<dbReference type="GO" id="GO:0019632">
    <property type="term" value="P:shikimate metabolic process"/>
    <property type="evidence" value="ECO:0007669"/>
    <property type="project" value="InterPro"/>
</dbReference>
<dbReference type="CDD" id="cd01065">
    <property type="entry name" value="NAD_bind_Shikimate_DH"/>
    <property type="match status" value="1"/>
</dbReference>
<dbReference type="FunFam" id="3.40.50.10860:FF:000006">
    <property type="entry name" value="Shikimate dehydrogenase (NADP(+))"/>
    <property type="match status" value="1"/>
</dbReference>
<dbReference type="Gene3D" id="3.40.50.10860">
    <property type="entry name" value="Leucine Dehydrogenase, chain A, domain 1"/>
    <property type="match status" value="1"/>
</dbReference>
<dbReference type="Gene3D" id="3.40.50.720">
    <property type="entry name" value="NAD(P)-binding Rossmann-like Domain"/>
    <property type="match status" value="1"/>
</dbReference>
<dbReference type="HAMAP" id="MF_00222">
    <property type="entry name" value="Shikimate_DH_AroE"/>
    <property type="match status" value="1"/>
</dbReference>
<dbReference type="InterPro" id="IPR046346">
    <property type="entry name" value="Aminoacid_DH-like_N_sf"/>
</dbReference>
<dbReference type="InterPro" id="IPR036291">
    <property type="entry name" value="NAD(P)-bd_dom_sf"/>
</dbReference>
<dbReference type="InterPro" id="IPR011342">
    <property type="entry name" value="Shikimate_DH"/>
</dbReference>
<dbReference type="InterPro" id="IPR013708">
    <property type="entry name" value="Shikimate_DH-bd_N"/>
</dbReference>
<dbReference type="InterPro" id="IPR022893">
    <property type="entry name" value="Shikimate_DH_fam"/>
</dbReference>
<dbReference type="InterPro" id="IPR006151">
    <property type="entry name" value="Shikm_DH/Glu-tRNA_Rdtase"/>
</dbReference>
<dbReference type="NCBIfam" id="TIGR00507">
    <property type="entry name" value="aroE"/>
    <property type="match status" value="1"/>
</dbReference>
<dbReference type="NCBIfam" id="NF001310">
    <property type="entry name" value="PRK00258.1-2"/>
    <property type="match status" value="1"/>
</dbReference>
<dbReference type="PANTHER" id="PTHR21089:SF1">
    <property type="entry name" value="BIFUNCTIONAL 3-DEHYDROQUINATE DEHYDRATASE_SHIKIMATE DEHYDROGENASE, CHLOROPLASTIC"/>
    <property type="match status" value="1"/>
</dbReference>
<dbReference type="PANTHER" id="PTHR21089">
    <property type="entry name" value="SHIKIMATE DEHYDROGENASE"/>
    <property type="match status" value="1"/>
</dbReference>
<dbReference type="Pfam" id="PF01488">
    <property type="entry name" value="Shikimate_DH"/>
    <property type="match status" value="1"/>
</dbReference>
<dbReference type="Pfam" id="PF08501">
    <property type="entry name" value="Shikimate_dh_N"/>
    <property type="match status" value="1"/>
</dbReference>
<dbReference type="SUPFAM" id="SSF53223">
    <property type="entry name" value="Aminoacid dehydrogenase-like, N-terminal domain"/>
    <property type="match status" value="1"/>
</dbReference>
<dbReference type="SUPFAM" id="SSF51735">
    <property type="entry name" value="NAD(P)-binding Rossmann-fold domains"/>
    <property type="match status" value="1"/>
</dbReference>
<organism>
    <name type="scientific">Acinetobacter baumannii (strain ACICU)</name>
    <dbReference type="NCBI Taxonomy" id="405416"/>
    <lineage>
        <taxon>Bacteria</taxon>
        <taxon>Pseudomonadati</taxon>
        <taxon>Pseudomonadota</taxon>
        <taxon>Gammaproteobacteria</taxon>
        <taxon>Moraxellales</taxon>
        <taxon>Moraxellaceae</taxon>
        <taxon>Acinetobacter</taxon>
        <taxon>Acinetobacter calcoaceticus/baumannii complex</taxon>
    </lineage>
</organism>
<name>AROE_ACIBC</name>